<reference key="1">
    <citation type="journal article" date="1998" name="Genome Res.">
        <title>Snapshot of a large dynamic replicon in a halophilic archaeon: megaplasmid or minichromosome?</title>
        <authorList>
            <person name="Ng W.V."/>
            <person name="Ciufo S.A."/>
            <person name="Smith T.M."/>
            <person name="Bumgarner R.E."/>
            <person name="Baskin D."/>
            <person name="Faust J."/>
            <person name="Hall B."/>
            <person name="Loretz C."/>
            <person name="Seto J."/>
            <person name="Slagel J."/>
            <person name="Hood L."/>
            <person name="DasSarma S."/>
        </authorList>
    </citation>
    <scope>NUCLEOTIDE SEQUENCE [LARGE SCALE GENOMIC DNA]</scope>
    <source>
        <strain>ATCC 700922 / JCM 11081 / NRC-1</strain>
    </source>
</reference>
<reference key="2">
    <citation type="journal article" date="2000" name="Proc. Natl. Acad. Sci. U.S.A.">
        <title>Genome sequence of Halobacterium species NRC-1.</title>
        <authorList>
            <person name="Ng W.V."/>
            <person name="Kennedy S.P."/>
            <person name="Mahairas G.G."/>
            <person name="Berquist B."/>
            <person name="Pan M."/>
            <person name="Shukla H.D."/>
            <person name="Lasky S.R."/>
            <person name="Baliga N.S."/>
            <person name="Thorsson V."/>
            <person name="Sbrogna J."/>
            <person name="Swartzell S."/>
            <person name="Weir D."/>
            <person name="Hall J."/>
            <person name="Dahl T.A."/>
            <person name="Welti R."/>
            <person name="Goo Y.A."/>
            <person name="Leithauser B."/>
            <person name="Keller K."/>
            <person name="Cruz R."/>
            <person name="Danson M.J."/>
            <person name="Hough D.W."/>
            <person name="Maddocks D.G."/>
            <person name="Jablonski P.E."/>
            <person name="Krebs M.P."/>
            <person name="Angevine C.M."/>
            <person name="Dale H."/>
            <person name="Isenbarger T.A."/>
            <person name="Peck R.F."/>
            <person name="Pohlschroder M."/>
            <person name="Spudich J.L."/>
            <person name="Jung K.-H."/>
            <person name="Alam M."/>
            <person name="Freitas T."/>
            <person name="Hou S."/>
            <person name="Daniels C.J."/>
            <person name="Dennis P.P."/>
            <person name="Omer A.D."/>
            <person name="Ebhardt H."/>
            <person name="Lowe T.M."/>
            <person name="Liang P."/>
            <person name="Riley M."/>
            <person name="Hood L."/>
            <person name="DasSarma S."/>
        </authorList>
    </citation>
    <scope>NUCLEOTIDE SEQUENCE [LARGE SCALE GENOMIC DNA]</scope>
    <source>
        <strain>ATCC 700922 / JCM 11081 / NRC-1</strain>
    </source>
</reference>
<reference key="3">
    <citation type="journal article" date="2004" name="J. Bacteriol.">
        <title>Arsenic resistance in Halobacterium sp. strain NRC-1 examined by using an improved gene knockout system.</title>
        <authorList>
            <person name="Wang G."/>
            <person name="Kennedy S.P."/>
            <person name="Fasiludeen S."/>
            <person name="Rensing C."/>
            <person name="DasSarma S."/>
        </authorList>
    </citation>
    <scope>FUNCTION</scope>
    <scope>INDUCTION</scope>
    <scope>DISRUPTION PHENOTYPE</scope>
    <source>
        <strain>ATCC 700922 / JCM 11081 / NRC-1</strain>
    </source>
</reference>
<organism>
    <name type="scientific">Halobacterium salinarum (strain ATCC 700922 / JCM 11081 / NRC-1)</name>
    <name type="common">Halobacterium halobium</name>
    <dbReference type="NCBI Taxonomy" id="64091"/>
    <lineage>
        <taxon>Archaea</taxon>
        <taxon>Methanobacteriati</taxon>
        <taxon>Methanobacteriota</taxon>
        <taxon>Stenosarchaea group</taxon>
        <taxon>Halobacteria</taxon>
        <taxon>Halobacteriales</taxon>
        <taxon>Halobacteriaceae</taxon>
        <taxon>Halobacterium</taxon>
        <taxon>Halobacterium salinarum NRC-34001</taxon>
    </lineage>
</organism>
<protein>
    <recommendedName>
        <fullName>Putative arsenical pump-driving ATPase</fullName>
        <ecNumber>7.3.2.7</ecNumber>
    </recommendedName>
    <alternativeName>
        <fullName>Arsenical resistance ATPase</fullName>
    </alternativeName>
    <alternativeName>
        <fullName>Arsenite-translocating ATPase</fullName>
    </alternativeName>
    <alternativeName>
        <fullName>Arsenite-transporting ATPase</fullName>
    </alternativeName>
</protein>
<keyword id="KW-0059">Arsenical resistance</keyword>
<keyword id="KW-0067">ATP-binding</keyword>
<keyword id="KW-0547">Nucleotide-binding</keyword>
<keyword id="KW-0614">Plasmid</keyword>
<keyword id="KW-1185">Reference proteome</keyword>
<keyword id="KW-1278">Translocase</keyword>
<geneLocation type="plasmid">
    <name>pNRC100</name>
</geneLocation>
<name>ARSA_HALSA</name>
<comment type="function">
    <text evidence="1 3">Anion-transporting ATPase. Catalyzes the extrusion of arsenite (By similarity). Involved in resistance to arsenite and antimonite but not to arsenate.</text>
</comment>
<comment type="catalytic activity">
    <reaction>
        <text>arsenite(in) + ATP + H2O = arsenite(out) + ADP + phosphate + H(+)</text>
        <dbReference type="Rhea" id="RHEA:11348"/>
        <dbReference type="ChEBI" id="CHEBI:15377"/>
        <dbReference type="ChEBI" id="CHEBI:15378"/>
        <dbReference type="ChEBI" id="CHEBI:29242"/>
        <dbReference type="ChEBI" id="CHEBI:30616"/>
        <dbReference type="ChEBI" id="CHEBI:43474"/>
        <dbReference type="ChEBI" id="CHEBI:456216"/>
        <dbReference type="EC" id="7.3.2.7"/>
    </reaction>
</comment>
<comment type="induction">
    <text evidence="3">By arsenite and antimonite.</text>
</comment>
<comment type="disruption phenotype">
    <text evidence="3">Deletion of the arsADRC operon results in increased sensitivity to arsenite and antimonite but not arsenate.</text>
</comment>
<comment type="similarity">
    <text evidence="4">Belongs to the arsA ATPase family.</text>
</comment>
<proteinExistence type="evidence at transcript level"/>
<dbReference type="EC" id="7.3.2.7"/>
<dbReference type="EMBL" id="AF016485">
    <property type="protein sequence ID" value="AAC82907.1"/>
    <property type="molecule type" value="Genomic_DNA"/>
</dbReference>
<dbReference type="PIR" id="T08340">
    <property type="entry name" value="T08340"/>
</dbReference>
<dbReference type="RefSeq" id="WP_010890458.1">
    <property type="nucleotide sequence ID" value="NZ_BK010830.1"/>
</dbReference>
<dbReference type="SMR" id="O52027"/>
<dbReference type="GeneID" id="89350680"/>
<dbReference type="KEGG" id="hal:arsA"/>
<dbReference type="HOGENOM" id="CLU_021619_0_0_2"/>
<dbReference type="InParanoid" id="O52027"/>
<dbReference type="OrthoDB" id="46198at2157"/>
<dbReference type="PhylomeDB" id="O52027"/>
<dbReference type="Proteomes" id="UP000000554">
    <property type="component" value="Plasmid pNRC100"/>
</dbReference>
<dbReference type="GO" id="GO:0005524">
    <property type="term" value="F:ATP binding"/>
    <property type="evidence" value="ECO:0007669"/>
    <property type="project" value="UniProtKB-KW"/>
</dbReference>
<dbReference type="GO" id="GO:0016887">
    <property type="term" value="F:ATP hydrolysis activity"/>
    <property type="evidence" value="ECO:0000318"/>
    <property type="project" value="GO_Central"/>
</dbReference>
<dbReference type="GO" id="GO:0015446">
    <property type="term" value="F:ATPase-coupled arsenite transmembrane transporter activity"/>
    <property type="evidence" value="ECO:0007669"/>
    <property type="project" value="UniProtKB-EC"/>
</dbReference>
<dbReference type="CDD" id="cd02035">
    <property type="entry name" value="ArsA"/>
    <property type="match status" value="2"/>
</dbReference>
<dbReference type="Gene3D" id="3.40.50.300">
    <property type="entry name" value="P-loop containing nucleotide triphosphate hydrolases"/>
    <property type="match status" value="2"/>
</dbReference>
<dbReference type="InterPro" id="IPR025723">
    <property type="entry name" value="Anion-transp_ATPase-like_dom"/>
</dbReference>
<dbReference type="InterPro" id="IPR027541">
    <property type="entry name" value="Ars_ATPase"/>
</dbReference>
<dbReference type="InterPro" id="IPR016300">
    <property type="entry name" value="ATPase_ArsA/GET3"/>
</dbReference>
<dbReference type="InterPro" id="IPR027417">
    <property type="entry name" value="P-loop_NTPase"/>
</dbReference>
<dbReference type="NCBIfam" id="NF041417">
    <property type="entry name" value="ArsA_halo"/>
    <property type="match status" value="1"/>
</dbReference>
<dbReference type="NCBIfam" id="TIGR00345">
    <property type="entry name" value="GET3_arsA_TRC40"/>
    <property type="match status" value="2"/>
</dbReference>
<dbReference type="PANTHER" id="PTHR10803">
    <property type="entry name" value="ARSENICAL PUMP-DRIVING ATPASE ARSENITE-TRANSLOCATING ATPASE"/>
    <property type="match status" value="1"/>
</dbReference>
<dbReference type="PANTHER" id="PTHR10803:SF3">
    <property type="entry name" value="ATPASE GET3"/>
    <property type="match status" value="1"/>
</dbReference>
<dbReference type="Pfam" id="PF02374">
    <property type="entry name" value="ArsA_ATPase"/>
    <property type="match status" value="3"/>
</dbReference>
<dbReference type="PIRSF" id="PIRSF001327">
    <property type="entry name" value="Arsenical_pump-driving_ATPase"/>
    <property type="match status" value="1"/>
</dbReference>
<dbReference type="SUPFAM" id="SSF52540">
    <property type="entry name" value="P-loop containing nucleoside triphosphate hydrolases"/>
    <property type="match status" value="2"/>
</dbReference>
<feature type="chain" id="PRO_0000152259" description="Putative arsenical pump-driving ATPase">
    <location>
        <begin position="1"/>
        <end position="644"/>
    </location>
</feature>
<feature type="binding site" evidence="2">
    <location>
        <begin position="26"/>
        <end position="33"/>
    </location>
    <ligand>
        <name>ATP</name>
        <dbReference type="ChEBI" id="CHEBI:30616"/>
    </ligand>
</feature>
<feature type="binding site" evidence="2">
    <location>
        <begin position="350"/>
        <end position="357"/>
    </location>
    <ligand>
        <name>ATP</name>
        <dbReference type="ChEBI" id="CHEBI:30616"/>
    </ligand>
</feature>
<sequence>MTATQTPAKEVVEPNSEDTEFVFFSGKGGVGKSTVSCATATWLADNDYDTLLVTTDPAPNLSDIFNQDIGHEVTAIDDVPNLSAIEIDPDVAAEEYRQETIEPMRALLGDEEIQTVEEQLNSPCVEEIAAFDNFVDFMDSPEYDVVVFDTAPTGHTIRLMELPSDWNAELEKGGSTCIGPAASMDDKKADYERAIDTLSDESRTSFAFVGKPESSSIDEIERSASDLAELGISSQLLVVNGYLPESVCEDPFFEGKRADEQAVIDRVESTFDQQALATYPLQPGEIAGLELLSDVGGVLYDGEEATVDVDAATRRATNEDTVDFDTFTDADAVAEELVPVEETRYLFFTGKGGVGKSTIASTTAVSLAEAGYETLVVTTDPAAHLADIFEQPVGHEPTSVGQANLDAARIDQERALEEYRTQVLDHVREMYDEKDDTQIDVEAAVANVEEELESPCAEEMAALEKFVSYFEEDGYDIVVFDTAPTGHTLRLLELPSDWKGFMDLGSLTKGAAPANGGKYDEVIETMQDPSRSSFAFVMYPEFTPMMEAYRAAMDLQDQVGIETSVVVANYLLPEDYGDNAFFENRRAQQAEYLEEISERFDVPMMLAPLRQEEPVGLDDLREFGADVTGLDGVGEDDREEVTVS</sequence>
<gene>
    <name type="primary">arsA</name>
    <name type="synonym">arsA2</name>
    <name type="ordered locus">VNG_5180G</name>
</gene>
<evidence type="ECO:0000250" key="1"/>
<evidence type="ECO:0000255" key="2"/>
<evidence type="ECO:0000269" key="3">
    <source>
    </source>
</evidence>
<evidence type="ECO:0000305" key="4"/>
<accession>O52027</accession>